<proteinExistence type="evidence at transcript level"/>
<evidence type="ECO:0000250" key="1"/>
<evidence type="ECO:0000250" key="2">
    <source>
        <dbReference type="UniProtKB" id="O75147"/>
    </source>
</evidence>
<evidence type="ECO:0000255" key="3"/>
<evidence type="ECO:0000255" key="4">
    <source>
        <dbReference type="PROSITE-ProRule" id="PRU00114"/>
    </source>
</evidence>
<evidence type="ECO:0000255" key="5">
    <source>
        <dbReference type="PROSITE-ProRule" id="PRU00316"/>
    </source>
</evidence>
<evidence type="ECO:0000256" key="6">
    <source>
        <dbReference type="SAM" id="MobiDB-lite"/>
    </source>
</evidence>
<evidence type="ECO:0000269" key="7">
    <source>
    </source>
</evidence>
<evidence type="ECO:0000305" key="8"/>
<organism>
    <name type="scientific">Rattus norvegicus</name>
    <name type="common">Rat</name>
    <dbReference type="NCBI Taxonomy" id="10116"/>
    <lineage>
        <taxon>Eukaryota</taxon>
        <taxon>Metazoa</taxon>
        <taxon>Chordata</taxon>
        <taxon>Craniata</taxon>
        <taxon>Vertebrata</taxon>
        <taxon>Euteleostomi</taxon>
        <taxon>Mammalia</taxon>
        <taxon>Eutheria</taxon>
        <taxon>Euarchontoglires</taxon>
        <taxon>Glires</taxon>
        <taxon>Rodentia</taxon>
        <taxon>Myomorpha</taxon>
        <taxon>Muroidea</taxon>
        <taxon>Muridae</taxon>
        <taxon>Murinae</taxon>
        <taxon>Rattus</taxon>
    </lineage>
</organism>
<dbReference type="EMBL" id="AC112361">
    <property type="status" value="NOT_ANNOTATED_CDS"/>
    <property type="molecule type" value="Genomic_DNA"/>
</dbReference>
<dbReference type="RefSeq" id="NP_001395974.1">
    <property type="nucleotide sequence ID" value="NM_001409045.1"/>
</dbReference>
<dbReference type="RefSeq" id="XP_006226950.1">
    <property type="nucleotide sequence ID" value="XM_006226888.2"/>
</dbReference>
<dbReference type="RefSeq" id="XP_006245367.1">
    <property type="nucleotide sequence ID" value="XM_006245305.2"/>
</dbReference>
<dbReference type="SMR" id="D3ZZ80"/>
<dbReference type="FunCoup" id="D3ZZ80">
    <property type="interactions" value="506"/>
</dbReference>
<dbReference type="STRING" id="10116.ENSRNOP00000020673"/>
<dbReference type="GlyGen" id="D3ZZ80">
    <property type="glycosylation" value="1 site"/>
</dbReference>
<dbReference type="PhosphoSitePlus" id="D3ZZ80"/>
<dbReference type="PaxDb" id="10116-ENSRNOP00000020673"/>
<dbReference type="Ensembl" id="ENSRNOT00000020673.8">
    <property type="protein sequence ID" value="ENSRNOP00000020673.7"/>
    <property type="gene ID" value="ENSRNOG00000015346.8"/>
</dbReference>
<dbReference type="GeneID" id="363259"/>
<dbReference type="AGR" id="RGD:1306073"/>
<dbReference type="RGD" id="1306073">
    <property type="gene designation" value="Obsl1"/>
</dbReference>
<dbReference type="eggNOG" id="KOG0613">
    <property type="taxonomic scope" value="Eukaryota"/>
</dbReference>
<dbReference type="GeneTree" id="ENSGT00940000156702"/>
<dbReference type="HOGENOM" id="CLU_000630_0_0_1"/>
<dbReference type="InParanoid" id="D3ZZ80"/>
<dbReference type="OMA" id="KAEVRWY"/>
<dbReference type="PhylomeDB" id="D3ZZ80"/>
<dbReference type="Reactome" id="R-RNO-8951664">
    <property type="pathway name" value="Neddylation"/>
</dbReference>
<dbReference type="PRO" id="PR:D3ZZ80"/>
<dbReference type="Proteomes" id="UP000002494">
    <property type="component" value="Chromosome 9"/>
</dbReference>
<dbReference type="Bgee" id="ENSRNOG00000015346">
    <property type="expression patterns" value="Expressed in skeletal muscle tissue and 17 other cell types or tissues"/>
</dbReference>
<dbReference type="GO" id="GO:1990393">
    <property type="term" value="C:3M complex"/>
    <property type="evidence" value="ECO:0000250"/>
    <property type="project" value="UniProtKB"/>
</dbReference>
<dbReference type="GO" id="GO:0005813">
    <property type="term" value="C:centrosome"/>
    <property type="evidence" value="ECO:0000250"/>
    <property type="project" value="UniProtKB"/>
</dbReference>
<dbReference type="GO" id="GO:0005737">
    <property type="term" value="C:cytoplasm"/>
    <property type="evidence" value="ECO:0000250"/>
    <property type="project" value="UniProtKB"/>
</dbReference>
<dbReference type="GO" id="GO:0005794">
    <property type="term" value="C:Golgi apparatus"/>
    <property type="evidence" value="ECO:0000250"/>
    <property type="project" value="UniProtKB"/>
</dbReference>
<dbReference type="GO" id="GO:0048471">
    <property type="term" value="C:perinuclear region of cytoplasm"/>
    <property type="evidence" value="ECO:0000250"/>
    <property type="project" value="UniProtKB"/>
</dbReference>
<dbReference type="GO" id="GO:0007030">
    <property type="term" value="P:Golgi organization"/>
    <property type="evidence" value="ECO:0000315"/>
    <property type="project" value="UniProtKB"/>
</dbReference>
<dbReference type="GO" id="GO:0000226">
    <property type="term" value="P:microtubule cytoskeleton organization"/>
    <property type="evidence" value="ECO:0000250"/>
    <property type="project" value="UniProtKB"/>
</dbReference>
<dbReference type="GO" id="GO:0050775">
    <property type="term" value="P:positive regulation of dendrite morphogenesis"/>
    <property type="evidence" value="ECO:0000315"/>
    <property type="project" value="UniProtKB"/>
</dbReference>
<dbReference type="GO" id="GO:0034067">
    <property type="term" value="P:protein localization to Golgi apparatus"/>
    <property type="evidence" value="ECO:0000266"/>
    <property type="project" value="RGD"/>
</dbReference>
<dbReference type="GO" id="GO:0007088">
    <property type="term" value="P:regulation of mitotic nuclear division"/>
    <property type="evidence" value="ECO:0000250"/>
    <property type="project" value="UniProtKB"/>
</dbReference>
<dbReference type="CDD" id="cd00063">
    <property type="entry name" value="FN3"/>
    <property type="match status" value="1"/>
</dbReference>
<dbReference type="CDD" id="cd00096">
    <property type="entry name" value="Ig"/>
    <property type="match status" value="1"/>
</dbReference>
<dbReference type="FunFam" id="2.60.40.10:FF:000856">
    <property type="entry name" value="Obscurin like 1"/>
    <property type="match status" value="1"/>
</dbReference>
<dbReference type="FunFam" id="2.60.40.10:FF:000963">
    <property type="entry name" value="Obscurin like 1"/>
    <property type="match status" value="1"/>
</dbReference>
<dbReference type="FunFam" id="2.60.40.10:FF:001210">
    <property type="entry name" value="Obscurin like 1"/>
    <property type="match status" value="1"/>
</dbReference>
<dbReference type="FunFam" id="2.60.40.10:FF:001780">
    <property type="entry name" value="Obscurin like 1"/>
    <property type="match status" value="1"/>
</dbReference>
<dbReference type="FunFam" id="2.60.40.10:FF:001811">
    <property type="entry name" value="Obscurin like 1"/>
    <property type="match status" value="1"/>
</dbReference>
<dbReference type="FunFam" id="2.60.40.10:FF:000211">
    <property type="entry name" value="Obscurin-like protein 1"/>
    <property type="match status" value="2"/>
</dbReference>
<dbReference type="FunFam" id="2.60.40.10:FF:001375">
    <property type="entry name" value="Obscurin-like protein 1 isoform X2"/>
    <property type="match status" value="1"/>
</dbReference>
<dbReference type="FunFam" id="2.60.40.10:FF:000241">
    <property type="entry name" value="obscurin-like protein 1 isoform X2"/>
    <property type="match status" value="4"/>
</dbReference>
<dbReference type="FunFam" id="2.60.40.10:FF:000502">
    <property type="entry name" value="obscurin-like protein 1 isoform X2"/>
    <property type="match status" value="1"/>
</dbReference>
<dbReference type="FunFam" id="2.60.40.10:FF:000569">
    <property type="entry name" value="obscurin-like protein 1 isoform X2"/>
    <property type="match status" value="2"/>
</dbReference>
<dbReference type="FunFam" id="2.60.40.10:FF:000608">
    <property type="entry name" value="obscurin-like protein 1 isoform X2"/>
    <property type="match status" value="1"/>
</dbReference>
<dbReference type="FunFam" id="2.60.40.10:FF:000623">
    <property type="entry name" value="obscurin-like protein 1 isoform X2"/>
    <property type="match status" value="1"/>
</dbReference>
<dbReference type="FunFam" id="2.60.40.10:FF:000393">
    <property type="entry name" value="Putative obscurin-like protein 1"/>
    <property type="match status" value="1"/>
</dbReference>
<dbReference type="FunFam" id="2.60.40.10:FF:000464">
    <property type="entry name" value="Putative obscurin-like protein 1"/>
    <property type="match status" value="1"/>
</dbReference>
<dbReference type="Gene3D" id="2.60.40.10">
    <property type="entry name" value="Immunoglobulins"/>
    <property type="match status" value="19"/>
</dbReference>
<dbReference type="InterPro" id="IPR003961">
    <property type="entry name" value="FN3_dom"/>
</dbReference>
<dbReference type="InterPro" id="IPR036116">
    <property type="entry name" value="FN3_sf"/>
</dbReference>
<dbReference type="InterPro" id="IPR007110">
    <property type="entry name" value="Ig-like_dom"/>
</dbReference>
<dbReference type="InterPro" id="IPR036179">
    <property type="entry name" value="Ig-like_dom_sf"/>
</dbReference>
<dbReference type="InterPro" id="IPR013783">
    <property type="entry name" value="Ig-like_fold"/>
</dbReference>
<dbReference type="InterPro" id="IPR013098">
    <property type="entry name" value="Ig_I-set"/>
</dbReference>
<dbReference type="InterPro" id="IPR003599">
    <property type="entry name" value="Ig_sub"/>
</dbReference>
<dbReference type="InterPro" id="IPR003598">
    <property type="entry name" value="Ig_sub2"/>
</dbReference>
<dbReference type="InterPro" id="IPR052385">
    <property type="entry name" value="Obscurin/Obscurin-like_Reg"/>
</dbReference>
<dbReference type="PANTHER" id="PTHR35971:SF6">
    <property type="entry name" value="OBSCURIN-LIKE PROTEIN 1"/>
    <property type="match status" value="1"/>
</dbReference>
<dbReference type="PANTHER" id="PTHR35971">
    <property type="entry name" value="SI:DKEY-31G6.6"/>
    <property type="match status" value="1"/>
</dbReference>
<dbReference type="Pfam" id="PF07679">
    <property type="entry name" value="I-set"/>
    <property type="match status" value="13"/>
</dbReference>
<dbReference type="Pfam" id="PF13927">
    <property type="entry name" value="Ig_3"/>
    <property type="match status" value="1"/>
</dbReference>
<dbReference type="SMART" id="SM00409">
    <property type="entry name" value="IG"/>
    <property type="match status" value="17"/>
</dbReference>
<dbReference type="SMART" id="SM00408">
    <property type="entry name" value="IGc2"/>
    <property type="match status" value="14"/>
</dbReference>
<dbReference type="SUPFAM" id="SSF49265">
    <property type="entry name" value="Fibronectin type III"/>
    <property type="match status" value="1"/>
</dbReference>
<dbReference type="SUPFAM" id="SSF48726">
    <property type="entry name" value="Immunoglobulin"/>
    <property type="match status" value="17"/>
</dbReference>
<dbReference type="PROSITE" id="PS50853">
    <property type="entry name" value="FN3"/>
    <property type="match status" value="1"/>
</dbReference>
<dbReference type="PROSITE" id="PS50835">
    <property type="entry name" value="IG_LIKE"/>
    <property type="match status" value="14"/>
</dbReference>
<sequence length="1805" mass="197865">MKASSGDQGSPPCFLRFPRPVRVVSGAEAELKCVVLGEPPPTVLWEKGGQQLVASERLSFPEDGAEHGLLLSGALPTDAGVYVCRARNAAGEAYAAAAVTVLEPPAPEPEPQSSECPPPPPGTGEGAPVFLTGPQSQWVLRGAEVVLTCQVGGLPEPKLYWEKDGMALDEVWDSSHYTLEPDRGASDGGASLTLRILAARLPDSGVYVCHARNAHGHAQAGALLQVHQPHENPPQDPDEPPVRVIEPLKCAPKTFWVNEGKHAKFRCYVMGKPEPEIEWHLEGRPLLPDRRRLMYRDRDGGFVLKVLYCQAKDRGLYVCAARNSAGQTLSAVQLHVKEPRLRFTRPLQDVEGREHGIVVLECKVPNSRIPTAWFREDQRLLPCRKYEQIEEGTVRRLVIHRLKADDDGVYLCEMRGRVRTVANVTVKGPILKRLPRKLDVLEGENAVLLVETQEAGVQGCWSRDGEELPATCQSSCGHMHALVLPGVTREDAGEVTFSLGNSRTTTLLRVKCVKHSPPGPPVLVEMFKGQKNTVLLTWKPPEPPPETSFIYRLERQEVGSEDWIQCFSIEKAGAVEVPGDCVPTEGDYRFRICTVSEHGRSPHVVFNGSAHLVPTARLVSGLEDVQVYDGEDAVFSLDLSTIIQGSWFLNGELLKNDEAEGQVEPGALRYRIEQKGLQHRLILQTVKHQDNGALVGFICPGVQDSAALSIQESPVHILSPQDKVLLTFTTSERVVLTCELSRVDFPATWYKDGQKVEESESLVVKMDGRKHRLILPEAQVRDSGEFECRTEGISAFFSVTVQDPPVHIVDPQEHVFVHAITSESVMLTCEVDREDAAVHWYKDGQEVEESAVIVLEKEGPRHRLVLPAAQPSDGGEFQCVVGDERAYFTVTITDVSSWIVYPNGKVYVAAVRLERVVLTCELCRPWAEVRWTKDGEEVLESPALLLEKEDTIRRLVLPSVQLEDSGEYLCEIHDESASFTITVTEPPVRIIYPQDEVTLHAVSLECVVLTCELSRVDAPVRWYKDGLEVEETEALVLQSDGPRRRLVLPAAQPEDGGEFVCDAGDDSAFFTVTVTAPPERIVHPVARSLDLQFGAPGHVELRCEVAPAGSQVRWYKDGLEVEVSDALQLGAEGPARTLTLPHAQPEDAGEYVCETRDEAVTFNVSLAELPVQFLAPEAVPNPLCVVPGEPVMLSCELSRASAHVSWSHNGNPVKQGEGLELRAEGPRRILCIQAADLAHTGVYTCQSGTAPGAPSLSFNVQVAEPPPVKLVSELTPLTVHEGDDATFQCEVSPPDAEVTWLRNGAIVTPGPQLEMVHSGSSRTLIIRGCQLKDAGTVTARAGATDTSARLHVRETELLFLRRLQDVRAEEGQDVYLEVETGRVGAPGAVRWLRGGEPLPLDSRLTTAQDGHVHRLSIHGVLLTDQGTYGCESHHDRTLARLSVRPRQLRELRPLEDVTVHEGGSATFQLELSQEGVTGEWAQGGVRLHPGPKCHIHSEGRTHCLVLSGLGLADSGCISFTADTLRCAARLTVREVPVTIVQGPQDLEVTEGDTATFECELSQTLADVIWEKDGQALSLSPRLRLQSLGTRRLLLLRRCSSSDAGTYCCAVGTARSGPARLTVREREVSVLGELRSLSAREGDSATFECTVSESETTGRWELGGRALRPGGRVRIRQEGKKHILVLSELRTEDTGEVCFQAGPAQSLARLEVEALPLQMCRRPPREKTVLVDRRAVLEVTVSRPGGHVCWMREGVELCPGSKYEMRSHGTTHSLVIHDVRPEDQGTYSCQAGQDSADTQLLVEGDD</sequence>
<gene>
    <name type="primary">Obsl1</name>
</gene>
<feature type="chain" id="PRO_0000422123" description="Obscurin-like protein 1">
    <location>
        <begin position="1"/>
        <end position="1805"/>
    </location>
</feature>
<feature type="domain" description="Ig-like 1" evidence="3">
    <location>
        <begin position="12"/>
        <end position="100"/>
    </location>
</feature>
<feature type="domain" description="Ig-like 2" evidence="3">
    <location>
        <begin position="128"/>
        <end position="225"/>
    </location>
</feature>
<feature type="domain" description="Ig-like 3" evidence="3">
    <location>
        <begin position="240"/>
        <end position="330"/>
    </location>
</feature>
<feature type="domain" description="Ig-like 4" evidence="3">
    <location>
        <begin position="339"/>
        <end position="425"/>
    </location>
</feature>
<feature type="domain" description="Fibronectin type-III" evidence="5">
    <location>
        <begin position="517"/>
        <end position="615"/>
    </location>
</feature>
<feature type="domain" description="Ig-like 5" evidence="3">
    <location>
        <begin position="720"/>
        <end position="800"/>
    </location>
</feature>
<feature type="domain" description="Ig-like 6" evidence="3">
    <location>
        <begin position="804"/>
        <end position="891"/>
    </location>
</feature>
<feature type="domain" description="Ig-like 7" evidence="3">
    <location>
        <begin position="902"/>
        <end position="982"/>
    </location>
</feature>
<feature type="domain" description="Ig-like 8" evidence="3">
    <location>
        <begin position="986"/>
        <end position="1075"/>
    </location>
</feature>
<feature type="domain" description="Ig-like 9" evidence="3">
    <location>
        <begin position="1078"/>
        <end position="1165"/>
    </location>
</feature>
<feature type="domain" description="Ig-like 10" evidence="3">
    <location>
        <begin position="1176"/>
        <end position="1261"/>
    </location>
</feature>
<feature type="domain" description="Ig-like 11" evidence="3">
    <location>
        <begin position="1266"/>
        <end position="1351"/>
    </location>
</feature>
<feature type="domain" description="Ig-like 12" evidence="3">
    <location>
        <begin position="1355"/>
        <end position="1442"/>
    </location>
</feature>
<feature type="domain" description="Ig-like 13" evidence="3">
    <location>
        <begin position="1536"/>
        <end position="1628"/>
    </location>
</feature>
<feature type="domain" description="Ig-like 14" evidence="3">
    <location>
        <begin position="1702"/>
        <end position="1798"/>
    </location>
</feature>
<feature type="region of interest" description="Interaction with TTN" evidence="2">
    <location>
        <begin position="17"/>
        <end position="19"/>
    </location>
</feature>
<feature type="region of interest" description="Interaction with TTN" evidence="2">
    <location>
        <begin position="85"/>
        <end position="94"/>
    </location>
</feature>
<feature type="region of interest" description="Disordered" evidence="6">
    <location>
        <begin position="104"/>
        <end position="131"/>
    </location>
</feature>
<feature type="compositionally biased region" description="Pro residues" evidence="6">
    <location>
        <begin position="104"/>
        <end position="122"/>
    </location>
</feature>
<feature type="modified residue" description="Phosphoserine" evidence="2">
    <location>
        <position position="10"/>
    </location>
</feature>
<feature type="disulfide bond" evidence="4">
    <location>
        <begin position="33"/>
        <end position="84"/>
    </location>
</feature>
<feature type="disulfide bond" evidence="4">
    <location>
        <begin position="149"/>
        <end position="209"/>
    </location>
</feature>
<feature type="disulfide bond" evidence="4">
    <location>
        <begin position="267"/>
        <end position="319"/>
    </location>
</feature>
<feature type="disulfide bond" evidence="4">
    <location>
        <begin position="362"/>
        <end position="412"/>
    </location>
</feature>
<feature type="disulfide bond" evidence="4">
    <location>
        <begin position="738"/>
        <end position="788"/>
    </location>
</feature>
<feature type="disulfide bond" evidence="4">
    <location>
        <begin position="829"/>
        <end position="879"/>
    </location>
</feature>
<feature type="disulfide bond" evidence="4">
    <location>
        <begin position="920"/>
        <end position="970"/>
    </location>
</feature>
<feature type="disulfide bond" evidence="4">
    <location>
        <begin position="1011"/>
        <end position="1061"/>
    </location>
</feature>
<feature type="disulfide bond" evidence="4">
    <location>
        <begin position="1103"/>
        <end position="1153"/>
    </location>
</feature>
<feature type="disulfide bond" evidence="4">
    <location>
        <begin position="1195"/>
        <end position="1245"/>
    </location>
</feature>
<feature type="disulfide bond" evidence="4">
    <location>
        <begin position="1558"/>
        <end position="1608"/>
    </location>
</feature>
<protein>
    <recommendedName>
        <fullName evidence="2">Obscurin-like protein 1</fullName>
    </recommendedName>
</protein>
<reference key="1">
    <citation type="journal article" date="2004" name="Nature">
        <title>Genome sequence of the Brown Norway rat yields insights into mammalian evolution.</title>
        <authorList>
            <person name="Gibbs R.A."/>
            <person name="Weinstock G.M."/>
            <person name="Metzker M.L."/>
            <person name="Muzny D.M."/>
            <person name="Sodergren E.J."/>
            <person name="Scherer S."/>
            <person name="Scott G."/>
            <person name="Steffen D."/>
            <person name="Worley K.C."/>
            <person name="Burch P.E."/>
            <person name="Okwuonu G."/>
            <person name="Hines S."/>
            <person name="Lewis L."/>
            <person name="Deramo C."/>
            <person name="Delgado O."/>
            <person name="Dugan-Rocha S."/>
            <person name="Miner G."/>
            <person name="Morgan M."/>
            <person name="Hawes A."/>
            <person name="Gill R."/>
            <person name="Holt R.A."/>
            <person name="Adams M.D."/>
            <person name="Amanatides P.G."/>
            <person name="Baden-Tillson H."/>
            <person name="Barnstead M."/>
            <person name="Chin S."/>
            <person name="Evans C.A."/>
            <person name="Ferriera S."/>
            <person name="Fosler C."/>
            <person name="Glodek A."/>
            <person name="Gu Z."/>
            <person name="Jennings D."/>
            <person name="Kraft C.L."/>
            <person name="Nguyen T."/>
            <person name="Pfannkoch C.M."/>
            <person name="Sitter C."/>
            <person name="Sutton G.G."/>
            <person name="Venter J.C."/>
            <person name="Woodage T."/>
            <person name="Smith D."/>
            <person name="Lee H.-M."/>
            <person name="Gustafson E."/>
            <person name="Cahill P."/>
            <person name="Kana A."/>
            <person name="Doucette-Stamm L."/>
            <person name="Weinstock K."/>
            <person name="Fechtel K."/>
            <person name="Weiss R.B."/>
            <person name="Dunn D.M."/>
            <person name="Green E.D."/>
            <person name="Blakesley R.W."/>
            <person name="Bouffard G.G."/>
            <person name="De Jong P.J."/>
            <person name="Osoegawa K."/>
            <person name="Zhu B."/>
            <person name="Marra M."/>
            <person name="Schein J."/>
            <person name="Bosdet I."/>
            <person name="Fjell C."/>
            <person name="Jones S."/>
            <person name="Krzywinski M."/>
            <person name="Mathewson C."/>
            <person name="Siddiqui A."/>
            <person name="Wye N."/>
            <person name="McPherson J."/>
            <person name="Zhao S."/>
            <person name="Fraser C.M."/>
            <person name="Shetty J."/>
            <person name="Shatsman S."/>
            <person name="Geer K."/>
            <person name="Chen Y."/>
            <person name="Abramzon S."/>
            <person name="Nierman W.C."/>
            <person name="Havlak P.H."/>
            <person name="Chen R."/>
            <person name="Durbin K.J."/>
            <person name="Egan A."/>
            <person name="Ren Y."/>
            <person name="Song X.-Z."/>
            <person name="Li B."/>
            <person name="Liu Y."/>
            <person name="Qin X."/>
            <person name="Cawley S."/>
            <person name="Cooney A.J."/>
            <person name="D'Souza L.M."/>
            <person name="Martin K."/>
            <person name="Wu J.Q."/>
            <person name="Gonzalez-Garay M.L."/>
            <person name="Jackson A.R."/>
            <person name="Kalafus K.J."/>
            <person name="McLeod M.P."/>
            <person name="Milosavljevic A."/>
            <person name="Virk D."/>
            <person name="Volkov A."/>
            <person name="Wheeler D.A."/>
            <person name="Zhang Z."/>
            <person name="Bailey J.A."/>
            <person name="Eichler E.E."/>
            <person name="Tuzun E."/>
            <person name="Birney E."/>
            <person name="Mongin E."/>
            <person name="Ureta-Vidal A."/>
            <person name="Woodwark C."/>
            <person name="Zdobnov E."/>
            <person name="Bork P."/>
            <person name="Suyama M."/>
            <person name="Torrents D."/>
            <person name="Alexandersson M."/>
            <person name="Trask B.J."/>
            <person name="Young J.M."/>
            <person name="Huang H."/>
            <person name="Wang H."/>
            <person name="Xing H."/>
            <person name="Daniels S."/>
            <person name="Gietzen D."/>
            <person name="Schmidt J."/>
            <person name="Stevens K."/>
            <person name="Vitt U."/>
            <person name="Wingrove J."/>
            <person name="Camara F."/>
            <person name="Mar Alba M."/>
            <person name="Abril J.F."/>
            <person name="Guigo R."/>
            <person name="Smit A."/>
            <person name="Dubchak I."/>
            <person name="Rubin E.M."/>
            <person name="Couronne O."/>
            <person name="Poliakov A."/>
            <person name="Huebner N."/>
            <person name="Ganten D."/>
            <person name="Goesele C."/>
            <person name="Hummel O."/>
            <person name="Kreitler T."/>
            <person name="Lee Y.-A."/>
            <person name="Monti J."/>
            <person name="Schulz H."/>
            <person name="Zimdahl H."/>
            <person name="Himmelbauer H."/>
            <person name="Lehrach H."/>
            <person name="Jacob H.J."/>
            <person name="Bromberg S."/>
            <person name="Gullings-Handley J."/>
            <person name="Jensen-Seaman M.I."/>
            <person name="Kwitek A.E."/>
            <person name="Lazar J."/>
            <person name="Pasko D."/>
            <person name="Tonellato P.J."/>
            <person name="Twigger S."/>
            <person name="Ponting C.P."/>
            <person name="Duarte J.M."/>
            <person name="Rice S."/>
            <person name="Goodstadt L."/>
            <person name="Beatson S.A."/>
            <person name="Emes R.D."/>
            <person name="Winter E.E."/>
            <person name="Webber C."/>
            <person name="Brandt P."/>
            <person name="Nyakatura G."/>
            <person name="Adetobi M."/>
            <person name="Chiaromonte F."/>
            <person name="Elnitski L."/>
            <person name="Eswara P."/>
            <person name="Hardison R.C."/>
            <person name="Hou M."/>
            <person name="Kolbe D."/>
            <person name="Makova K."/>
            <person name="Miller W."/>
            <person name="Nekrutenko A."/>
            <person name="Riemer C."/>
            <person name="Schwartz S."/>
            <person name="Taylor J."/>
            <person name="Yang S."/>
            <person name="Zhang Y."/>
            <person name="Lindpaintner K."/>
            <person name="Andrews T.D."/>
            <person name="Caccamo M."/>
            <person name="Clamp M."/>
            <person name="Clarke L."/>
            <person name="Curwen V."/>
            <person name="Durbin R.M."/>
            <person name="Eyras E."/>
            <person name="Searle S.M."/>
            <person name="Cooper G.M."/>
            <person name="Batzoglou S."/>
            <person name="Brudno M."/>
            <person name="Sidow A."/>
            <person name="Stone E.A."/>
            <person name="Payseur B.A."/>
            <person name="Bourque G."/>
            <person name="Lopez-Otin C."/>
            <person name="Puente X.S."/>
            <person name="Chakrabarti K."/>
            <person name="Chatterji S."/>
            <person name="Dewey C."/>
            <person name="Pachter L."/>
            <person name="Bray N."/>
            <person name="Yap V.B."/>
            <person name="Caspi A."/>
            <person name="Tesler G."/>
            <person name="Pevzner P.A."/>
            <person name="Haussler D."/>
            <person name="Roskin K.M."/>
            <person name="Baertsch R."/>
            <person name="Clawson H."/>
            <person name="Furey T.S."/>
            <person name="Hinrichs A.S."/>
            <person name="Karolchik D."/>
            <person name="Kent W.J."/>
            <person name="Rosenbloom K.R."/>
            <person name="Trumbower H."/>
            <person name="Weirauch M."/>
            <person name="Cooper D.N."/>
            <person name="Stenson P.D."/>
            <person name="Ma B."/>
            <person name="Brent M."/>
            <person name="Arumugam M."/>
            <person name="Shteynberg D."/>
            <person name="Copley R.R."/>
            <person name="Taylor M.S."/>
            <person name="Riethman H."/>
            <person name="Mudunuri U."/>
            <person name="Peterson J."/>
            <person name="Guyer M."/>
            <person name="Felsenfeld A."/>
            <person name="Old S."/>
            <person name="Mockrin S."/>
            <person name="Collins F.S."/>
        </authorList>
    </citation>
    <scope>NUCLEOTIDE SEQUENCE [LARGE SCALE GENOMIC DNA]</scope>
    <source>
        <strain>Brown Norway</strain>
    </source>
</reference>
<reference evidence="8" key="2">
    <citation type="journal article" date="2011" name="PLoS Biol.">
        <title>An OBSL1-Cul7Fbxw8 ubiquitin ligase signaling mechanism regulates Golgi morphology and dendrite patterning.</title>
        <authorList>
            <person name="Litterman N."/>
            <person name="Ikeuchi Y."/>
            <person name="Gallardo G."/>
            <person name="O'Connell B.C."/>
            <person name="Sowa M.E."/>
            <person name="Gygi S.P."/>
            <person name="Harper J.W."/>
            <person name="Bonni A."/>
        </authorList>
    </citation>
    <scope>FUNCTION</scope>
    <scope>TISSUE SPECIFICITY</scope>
</reference>
<name>OBSL1_RAT</name>
<comment type="function">
    <text evidence="1 7">Core component of the 3M complex, a complex required to regulate microtubule dynamics and genome integrity. It is unclear how the 3M complex regulates microtubules, it could act by controlling the level of a microtubule stabilizer (By similarity). Acts as a regulator of the Cul7-RING(FBXW8) ubiquitin-protein ligase, playing a critical role in the ubiquitin ligase pathway that regulates Golgi morphogenesis and dendrite patterning in brain. Required to localize CUL7 to the Golgi apparatus in neurons.</text>
</comment>
<comment type="subunit">
    <text evidence="1">Component of the 3M complex, composed of core components CUL7, CCDC8 and OBSL1. Interacts with CCDC8. Interacts with CUL7; the interaction is direct. Interacts with FBXW8. Interacts (via N-terminal Ig-like domain) with TTN/titin (via C-terminal Ig-like domain); the interaction is direct (By similarity).</text>
</comment>
<comment type="subcellular location">
    <subcellularLocation>
        <location evidence="2">Cytoplasm</location>
    </subcellularLocation>
    <subcellularLocation>
        <location evidence="2">Cytoplasm</location>
        <location evidence="2">Perinuclear region</location>
    </subcellularLocation>
    <subcellularLocation>
        <location evidence="2">Golgi apparatus</location>
    </subcellularLocation>
    <text evidence="2">Colocalizes with CUL7 at the Golgi apparatus in neurons.</text>
</comment>
<comment type="tissue specificity">
    <text evidence="7">Expressed in granule neurons, with levels decreasing with neuronal maturation.</text>
</comment>
<keyword id="KW-0963">Cytoplasm</keyword>
<keyword id="KW-1015">Disulfide bond</keyword>
<keyword id="KW-0333">Golgi apparatus</keyword>
<keyword id="KW-0393">Immunoglobulin domain</keyword>
<keyword id="KW-0597">Phosphoprotein</keyword>
<keyword id="KW-1185">Reference proteome</keyword>
<keyword id="KW-0677">Repeat</keyword>
<accession>D3ZZ80</accession>